<sequence length="535" mass="59808">MTKYIFVTGGVVSSLGKGITAASLGRLLKNRGLNVTIQKFDPYINVDPGTMSPYQHGEVFVTDDGAETDLDLGHYERFIDINLNKYSNVTTGKIYSSVLQKERRGEYLGGTVQVIPHITNEIKERVYRSGRETNADVVITEIGGTVGDIESLPFLEAIRQIKSDIGRDNVMYIHCTLIPYLKAAGEMKTKPTQHSVKELRSLGIQPNIIVVRTEMPVSQDMKDKLALFCDIDTKAVIEARDADTLYAVPLSLQEQNMDQIVCDHLKLDNPAADMTEWTALVNKVRNLSKKTKIALVGKYVELQDAYISVVEALRHAGYSFDTDVEVKWVNAEHVTAENVKELVGDTDGILVPGGFGDRGVEGKIVAIQYARENKVPFLGICLGMQLASIEFARNVLGLEGANSSEINPDTPYAIIDLLPEQKDVEDLGGTLRLGLYPCKLAEETNAYNAYNEPVVYERHRHRYEFNNQFRPDMEKEGFVFSGTSPDGRLVEIIELKDHPWFVAAQFHPELVSRPNRPQPLFHDFVRASITNKESK</sequence>
<reference key="1">
    <citation type="journal article" date="2003" name="Nature">
        <title>Genome sequence of Bacillus cereus and comparative analysis with Bacillus anthracis.</title>
        <authorList>
            <person name="Ivanova N."/>
            <person name="Sorokin A."/>
            <person name="Anderson I."/>
            <person name="Galleron N."/>
            <person name="Candelon B."/>
            <person name="Kapatral V."/>
            <person name="Bhattacharyya A."/>
            <person name="Reznik G."/>
            <person name="Mikhailova N."/>
            <person name="Lapidus A."/>
            <person name="Chu L."/>
            <person name="Mazur M."/>
            <person name="Goltsman E."/>
            <person name="Larsen N."/>
            <person name="D'Souza M."/>
            <person name="Walunas T."/>
            <person name="Grechkin Y."/>
            <person name="Pusch G."/>
            <person name="Haselkorn R."/>
            <person name="Fonstein M."/>
            <person name="Ehrlich S.D."/>
            <person name="Overbeek R."/>
            <person name="Kyrpides N.C."/>
        </authorList>
    </citation>
    <scope>NUCLEOTIDE SEQUENCE [LARGE SCALE GENOMIC DNA]</scope>
    <source>
        <strain>ATCC 14579 / DSM 31 / CCUG 7414 / JCM 2152 / NBRC 15305 / NCIMB 9373 / NCTC 2599 / NRRL B-3711</strain>
    </source>
</reference>
<comment type="function">
    <text evidence="1">Catalyzes the ATP-dependent amination of UTP to CTP with either L-glutamine or ammonia as the source of nitrogen. Regulates intracellular CTP levels through interactions with the four ribonucleotide triphosphates.</text>
</comment>
<comment type="catalytic activity">
    <reaction evidence="1">
        <text>UTP + L-glutamine + ATP + H2O = CTP + L-glutamate + ADP + phosphate + 2 H(+)</text>
        <dbReference type="Rhea" id="RHEA:26426"/>
        <dbReference type="ChEBI" id="CHEBI:15377"/>
        <dbReference type="ChEBI" id="CHEBI:15378"/>
        <dbReference type="ChEBI" id="CHEBI:29985"/>
        <dbReference type="ChEBI" id="CHEBI:30616"/>
        <dbReference type="ChEBI" id="CHEBI:37563"/>
        <dbReference type="ChEBI" id="CHEBI:43474"/>
        <dbReference type="ChEBI" id="CHEBI:46398"/>
        <dbReference type="ChEBI" id="CHEBI:58359"/>
        <dbReference type="ChEBI" id="CHEBI:456216"/>
        <dbReference type="EC" id="6.3.4.2"/>
    </reaction>
</comment>
<comment type="catalytic activity">
    <reaction evidence="1">
        <text>L-glutamine + H2O = L-glutamate + NH4(+)</text>
        <dbReference type="Rhea" id="RHEA:15889"/>
        <dbReference type="ChEBI" id="CHEBI:15377"/>
        <dbReference type="ChEBI" id="CHEBI:28938"/>
        <dbReference type="ChEBI" id="CHEBI:29985"/>
        <dbReference type="ChEBI" id="CHEBI:58359"/>
    </reaction>
</comment>
<comment type="catalytic activity">
    <reaction evidence="1">
        <text>UTP + NH4(+) + ATP = CTP + ADP + phosphate + 2 H(+)</text>
        <dbReference type="Rhea" id="RHEA:16597"/>
        <dbReference type="ChEBI" id="CHEBI:15378"/>
        <dbReference type="ChEBI" id="CHEBI:28938"/>
        <dbReference type="ChEBI" id="CHEBI:30616"/>
        <dbReference type="ChEBI" id="CHEBI:37563"/>
        <dbReference type="ChEBI" id="CHEBI:43474"/>
        <dbReference type="ChEBI" id="CHEBI:46398"/>
        <dbReference type="ChEBI" id="CHEBI:456216"/>
    </reaction>
</comment>
<comment type="activity regulation">
    <text evidence="1">Allosterically activated by GTP, when glutamine is the substrate; GTP has no effect on the reaction when ammonia is the substrate. The allosteric effector GTP functions by stabilizing the protein conformation that binds the tetrahedral intermediate(s) formed during glutamine hydrolysis. Inhibited by the product CTP, via allosteric rather than competitive inhibition.</text>
</comment>
<comment type="pathway">
    <text evidence="1">Pyrimidine metabolism; CTP biosynthesis via de novo pathway; CTP from UDP: step 2/2.</text>
</comment>
<comment type="subunit">
    <text evidence="1">Homotetramer.</text>
</comment>
<comment type="miscellaneous">
    <text evidence="1">CTPSs have evolved a hybrid strategy for distinguishing between UTP and CTP. The overlapping regions of the product feedback inhibitory and substrate sites recognize a common feature in both compounds, the triphosphate moiety. To differentiate isosteric substrate and product pyrimidine rings, an additional pocket far from the expected kinase/ligase catalytic site, specifically recognizes the cytosine and ribose portions of the product inhibitor.</text>
</comment>
<comment type="similarity">
    <text evidence="1">Belongs to the CTP synthase family.</text>
</comment>
<dbReference type="EC" id="6.3.4.2" evidence="1"/>
<dbReference type="EMBL" id="AE016877">
    <property type="protein sequence ID" value="AAP12201.1"/>
    <property type="molecule type" value="Genomic_DNA"/>
</dbReference>
<dbReference type="RefSeq" id="NP_835000.1">
    <property type="nucleotide sequence ID" value="NC_004722.1"/>
</dbReference>
<dbReference type="RefSeq" id="WP_000170460.1">
    <property type="nucleotide sequence ID" value="NZ_CP138336.1"/>
</dbReference>
<dbReference type="SMR" id="Q814T2"/>
<dbReference type="STRING" id="226900.BC_5338"/>
<dbReference type="MEROPS" id="C26.964"/>
<dbReference type="KEGG" id="bce:BC5338"/>
<dbReference type="PATRIC" id="fig|226900.8.peg.5512"/>
<dbReference type="HOGENOM" id="CLU_011675_5_0_9"/>
<dbReference type="OrthoDB" id="9801107at2"/>
<dbReference type="UniPathway" id="UPA00159">
    <property type="reaction ID" value="UER00277"/>
</dbReference>
<dbReference type="Proteomes" id="UP000001417">
    <property type="component" value="Chromosome"/>
</dbReference>
<dbReference type="GO" id="GO:0005829">
    <property type="term" value="C:cytosol"/>
    <property type="evidence" value="ECO:0000318"/>
    <property type="project" value="GO_Central"/>
</dbReference>
<dbReference type="GO" id="GO:0005524">
    <property type="term" value="F:ATP binding"/>
    <property type="evidence" value="ECO:0007669"/>
    <property type="project" value="UniProtKB-KW"/>
</dbReference>
<dbReference type="GO" id="GO:0003883">
    <property type="term" value="F:CTP synthase activity"/>
    <property type="evidence" value="ECO:0000318"/>
    <property type="project" value="GO_Central"/>
</dbReference>
<dbReference type="GO" id="GO:0004359">
    <property type="term" value="F:glutaminase activity"/>
    <property type="evidence" value="ECO:0007669"/>
    <property type="project" value="RHEA"/>
</dbReference>
<dbReference type="GO" id="GO:0042802">
    <property type="term" value="F:identical protein binding"/>
    <property type="evidence" value="ECO:0000318"/>
    <property type="project" value="GO_Central"/>
</dbReference>
<dbReference type="GO" id="GO:0046872">
    <property type="term" value="F:metal ion binding"/>
    <property type="evidence" value="ECO:0007669"/>
    <property type="project" value="UniProtKB-KW"/>
</dbReference>
<dbReference type="GO" id="GO:0044210">
    <property type="term" value="P:'de novo' CTP biosynthetic process"/>
    <property type="evidence" value="ECO:0007669"/>
    <property type="project" value="UniProtKB-UniRule"/>
</dbReference>
<dbReference type="GO" id="GO:0006241">
    <property type="term" value="P:CTP biosynthetic process"/>
    <property type="evidence" value="ECO:0000318"/>
    <property type="project" value="GO_Central"/>
</dbReference>
<dbReference type="GO" id="GO:0019856">
    <property type="term" value="P:pyrimidine nucleobase biosynthetic process"/>
    <property type="evidence" value="ECO:0000318"/>
    <property type="project" value="GO_Central"/>
</dbReference>
<dbReference type="CDD" id="cd03113">
    <property type="entry name" value="CTPS_N"/>
    <property type="match status" value="1"/>
</dbReference>
<dbReference type="CDD" id="cd01746">
    <property type="entry name" value="GATase1_CTP_Synthase"/>
    <property type="match status" value="1"/>
</dbReference>
<dbReference type="FunFam" id="3.40.50.300:FF:000009">
    <property type="entry name" value="CTP synthase"/>
    <property type="match status" value="1"/>
</dbReference>
<dbReference type="FunFam" id="3.40.50.880:FF:000002">
    <property type="entry name" value="CTP synthase"/>
    <property type="match status" value="1"/>
</dbReference>
<dbReference type="Gene3D" id="3.40.50.880">
    <property type="match status" value="1"/>
</dbReference>
<dbReference type="Gene3D" id="3.40.50.300">
    <property type="entry name" value="P-loop containing nucleotide triphosphate hydrolases"/>
    <property type="match status" value="1"/>
</dbReference>
<dbReference type="HAMAP" id="MF_01227">
    <property type="entry name" value="PyrG"/>
    <property type="match status" value="1"/>
</dbReference>
<dbReference type="InterPro" id="IPR029062">
    <property type="entry name" value="Class_I_gatase-like"/>
</dbReference>
<dbReference type="InterPro" id="IPR004468">
    <property type="entry name" value="CTP_synthase"/>
</dbReference>
<dbReference type="InterPro" id="IPR017456">
    <property type="entry name" value="CTP_synthase_N"/>
</dbReference>
<dbReference type="InterPro" id="IPR017926">
    <property type="entry name" value="GATASE"/>
</dbReference>
<dbReference type="InterPro" id="IPR033828">
    <property type="entry name" value="GATase1_CTP_Synthase"/>
</dbReference>
<dbReference type="InterPro" id="IPR027417">
    <property type="entry name" value="P-loop_NTPase"/>
</dbReference>
<dbReference type="NCBIfam" id="NF003792">
    <property type="entry name" value="PRK05380.1"/>
    <property type="match status" value="1"/>
</dbReference>
<dbReference type="NCBIfam" id="TIGR00337">
    <property type="entry name" value="PyrG"/>
    <property type="match status" value="1"/>
</dbReference>
<dbReference type="PANTHER" id="PTHR11550">
    <property type="entry name" value="CTP SYNTHASE"/>
    <property type="match status" value="1"/>
</dbReference>
<dbReference type="PANTHER" id="PTHR11550:SF0">
    <property type="entry name" value="CTP SYNTHASE-RELATED"/>
    <property type="match status" value="1"/>
</dbReference>
<dbReference type="Pfam" id="PF06418">
    <property type="entry name" value="CTP_synth_N"/>
    <property type="match status" value="1"/>
</dbReference>
<dbReference type="Pfam" id="PF00117">
    <property type="entry name" value="GATase"/>
    <property type="match status" value="1"/>
</dbReference>
<dbReference type="SUPFAM" id="SSF52317">
    <property type="entry name" value="Class I glutamine amidotransferase-like"/>
    <property type="match status" value="1"/>
</dbReference>
<dbReference type="SUPFAM" id="SSF52540">
    <property type="entry name" value="P-loop containing nucleoside triphosphate hydrolases"/>
    <property type="match status" value="1"/>
</dbReference>
<dbReference type="PROSITE" id="PS51273">
    <property type="entry name" value="GATASE_TYPE_1"/>
    <property type="match status" value="1"/>
</dbReference>
<accession>Q814T2</accession>
<feature type="chain" id="PRO_0000138163" description="CTP synthase">
    <location>
        <begin position="1"/>
        <end position="535"/>
    </location>
</feature>
<feature type="domain" description="Glutamine amidotransferase type-1" evidence="1">
    <location>
        <begin position="292"/>
        <end position="534"/>
    </location>
</feature>
<feature type="region of interest" description="Amidoligase domain" evidence="1">
    <location>
        <begin position="1"/>
        <end position="267"/>
    </location>
</feature>
<feature type="active site" description="Nucleophile; for glutamine hydrolysis" evidence="1">
    <location>
        <position position="381"/>
    </location>
</feature>
<feature type="active site" evidence="1">
    <location>
        <position position="507"/>
    </location>
</feature>
<feature type="active site" evidence="1">
    <location>
        <position position="509"/>
    </location>
</feature>
<feature type="binding site" evidence="1">
    <location>
        <position position="13"/>
    </location>
    <ligand>
        <name>CTP</name>
        <dbReference type="ChEBI" id="CHEBI:37563"/>
        <note>allosteric inhibitor</note>
    </ligand>
</feature>
<feature type="binding site" evidence="1">
    <location>
        <position position="13"/>
    </location>
    <ligand>
        <name>UTP</name>
        <dbReference type="ChEBI" id="CHEBI:46398"/>
    </ligand>
</feature>
<feature type="binding site" evidence="1">
    <location>
        <begin position="14"/>
        <end position="19"/>
    </location>
    <ligand>
        <name>ATP</name>
        <dbReference type="ChEBI" id="CHEBI:30616"/>
    </ligand>
</feature>
<feature type="binding site" evidence="1">
    <location>
        <position position="54"/>
    </location>
    <ligand>
        <name>L-glutamine</name>
        <dbReference type="ChEBI" id="CHEBI:58359"/>
    </ligand>
</feature>
<feature type="binding site" evidence="1">
    <location>
        <position position="71"/>
    </location>
    <ligand>
        <name>ATP</name>
        <dbReference type="ChEBI" id="CHEBI:30616"/>
    </ligand>
</feature>
<feature type="binding site" evidence="1">
    <location>
        <position position="71"/>
    </location>
    <ligand>
        <name>Mg(2+)</name>
        <dbReference type="ChEBI" id="CHEBI:18420"/>
    </ligand>
</feature>
<feature type="binding site" evidence="1">
    <location>
        <position position="141"/>
    </location>
    <ligand>
        <name>Mg(2+)</name>
        <dbReference type="ChEBI" id="CHEBI:18420"/>
    </ligand>
</feature>
<feature type="binding site" evidence="1">
    <location>
        <begin position="148"/>
        <end position="150"/>
    </location>
    <ligand>
        <name>CTP</name>
        <dbReference type="ChEBI" id="CHEBI:37563"/>
        <note>allosteric inhibitor</note>
    </ligand>
</feature>
<feature type="binding site" evidence="1">
    <location>
        <begin position="188"/>
        <end position="193"/>
    </location>
    <ligand>
        <name>CTP</name>
        <dbReference type="ChEBI" id="CHEBI:37563"/>
        <note>allosteric inhibitor</note>
    </ligand>
</feature>
<feature type="binding site" evidence="1">
    <location>
        <begin position="188"/>
        <end position="193"/>
    </location>
    <ligand>
        <name>UTP</name>
        <dbReference type="ChEBI" id="CHEBI:46398"/>
    </ligand>
</feature>
<feature type="binding site" evidence="1">
    <location>
        <position position="224"/>
    </location>
    <ligand>
        <name>CTP</name>
        <dbReference type="ChEBI" id="CHEBI:37563"/>
        <note>allosteric inhibitor</note>
    </ligand>
</feature>
<feature type="binding site" evidence="1">
    <location>
        <position position="224"/>
    </location>
    <ligand>
        <name>UTP</name>
        <dbReference type="ChEBI" id="CHEBI:46398"/>
    </ligand>
</feature>
<feature type="binding site" evidence="1">
    <location>
        <begin position="240"/>
        <end position="242"/>
    </location>
    <ligand>
        <name>ATP</name>
        <dbReference type="ChEBI" id="CHEBI:30616"/>
    </ligand>
</feature>
<feature type="binding site" evidence="1">
    <location>
        <position position="354"/>
    </location>
    <ligand>
        <name>L-glutamine</name>
        <dbReference type="ChEBI" id="CHEBI:58359"/>
    </ligand>
</feature>
<feature type="binding site" evidence="1">
    <location>
        <begin position="382"/>
        <end position="385"/>
    </location>
    <ligand>
        <name>L-glutamine</name>
        <dbReference type="ChEBI" id="CHEBI:58359"/>
    </ligand>
</feature>
<feature type="binding site" evidence="1">
    <location>
        <position position="405"/>
    </location>
    <ligand>
        <name>L-glutamine</name>
        <dbReference type="ChEBI" id="CHEBI:58359"/>
    </ligand>
</feature>
<feature type="binding site" evidence="1">
    <location>
        <position position="462"/>
    </location>
    <ligand>
        <name>L-glutamine</name>
        <dbReference type="ChEBI" id="CHEBI:58359"/>
    </ligand>
</feature>
<keyword id="KW-0067">ATP-binding</keyword>
<keyword id="KW-0315">Glutamine amidotransferase</keyword>
<keyword id="KW-0436">Ligase</keyword>
<keyword id="KW-0460">Magnesium</keyword>
<keyword id="KW-0479">Metal-binding</keyword>
<keyword id="KW-0547">Nucleotide-binding</keyword>
<keyword id="KW-0665">Pyrimidine biosynthesis</keyword>
<keyword id="KW-1185">Reference proteome</keyword>
<proteinExistence type="inferred from homology"/>
<protein>
    <recommendedName>
        <fullName evidence="1">CTP synthase</fullName>
        <ecNumber evidence="1">6.3.4.2</ecNumber>
    </recommendedName>
    <alternativeName>
        <fullName evidence="1">Cytidine 5'-triphosphate synthase</fullName>
    </alternativeName>
    <alternativeName>
        <fullName evidence="1">Cytidine triphosphate synthetase</fullName>
        <shortName evidence="1">CTP synthetase</shortName>
        <shortName evidence="1">CTPS</shortName>
    </alternativeName>
    <alternativeName>
        <fullName evidence="1">UTP--ammonia ligase</fullName>
    </alternativeName>
</protein>
<gene>
    <name evidence="1" type="primary">pyrG</name>
    <name type="ordered locus">BC_5338</name>
</gene>
<organism>
    <name type="scientific">Bacillus cereus (strain ATCC 14579 / DSM 31 / CCUG 7414 / JCM 2152 / NBRC 15305 / NCIMB 9373 / NCTC 2599 / NRRL B-3711)</name>
    <dbReference type="NCBI Taxonomy" id="226900"/>
    <lineage>
        <taxon>Bacteria</taxon>
        <taxon>Bacillati</taxon>
        <taxon>Bacillota</taxon>
        <taxon>Bacilli</taxon>
        <taxon>Bacillales</taxon>
        <taxon>Bacillaceae</taxon>
        <taxon>Bacillus</taxon>
        <taxon>Bacillus cereus group</taxon>
    </lineage>
</organism>
<evidence type="ECO:0000255" key="1">
    <source>
        <dbReference type="HAMAP-Rule" id="MF_01227"/>
    </source>
</evidence>
<name>PYRG_BACCR</name>